<comment type="function">
    <text evidence="1">Catalyzes the covalent attachment of ubiquitin to other proteins. Acts as an essential factor of the anaphase promoting complex/cyclosome (APC/C), a cell cycle-regulated ubiquitin ligase that controls progression through mitosis. Acts by specifically elongating polyubiquitin chains initiated by the E2 enzyme vih/UbcH10 on APC/C substrates, enhancing the degradation of APC/C substrates by the proteasome and promoting mitotic exit.</text>
</comment>
<comment type="catalytic activity">
    <reaction evidence="1 2">
        <text>S-ubiquitinyl-[E1 ubiquitin-activating enzyme]-L-cysteine + [E2 ubiquitin-conjugating enzyme]-L-cysteine = [E1 ubiquitin-activating enzyme]-L-cysteine + S-ubiquitinyl-[E2 ubiquitin-conjugating enzyme]-L-cysteine.</text>
        <dbReference type="EC" id="2.3.2.23"/>
    </reaction>
</comment>
<comment type="pathway">
    <text evidence="1">Protein modification; protein ubiquitination.</text>
</comment>
<comment type="similarity">
    <text evidence="1">Belongs to the ubiquitin-conjugating enzyme family.</text>
</comment>
<dbReference type="EC" id="2.3.2.23"/>
<dbReference type="EMBL" id="CH479232">
    <property type="protein sequence ID" value="EDW36619.1"/>
    <property type="molecule type" value="Genomic_DNA"/>
</dbReference>
<dbReference type="SMR" id="B4H9W2"/>
<dbReference type="STRING" id="7234.B4H9W2"/>
<dbReference type="EnsemblMetazoa" id="FBtr0181616">
    <property type="protein sequence ID" value="FBpp0180108"/>
    <property type="gene ID" value="FBgn0153605"/>
</dbReference>
<dbReference type="EnsemblMetazoa" id="XM_002027605.2">
    <property type="protein sequence ID" value="XP_002027641.1"/>
    <property type="gene ID" value="LOC6602614"/>
</dbReference>
<dbReference type="GeneID" id="6602614"/>
<dbReference type="KEGG" id="dpe:6602614"/>
<dbReference type="eggNOG" id="KOG0423">
    <property type="taxonomic scope" value="Eukaryota"/>
</dbReference>
<dbReference type="HOGENOM" id="CLU_030988_5_3_1"/>
<dbReference type="OMA" id="QPAKCGA"/>
<dbReference type="OrthoDB" id="10069349at2759"/>
<dbReference type="PhylomeDB" id="B4H9W2"/>
<dbReference type="UniPathway" id="UPA00143"/>
<dbReference type="Proteomes" id="UP000008744">
    <property type="component" value="Unassembled WGS sequence"/>
</dbReference>
<dbReference type="GO" id="GO:0005524">
    <property type="term" value="F:ATP binding"/>
    <property type="evidence" value="ECO:0007669"/>
    <property type="project" value="UniProtKB-KW"/>
</dbReference>
<dbReference type="GO" id="GO:0061631">
    <property type="term" value="F:ubiquitin conjugating enzyme activity"/>
    <property type="evidence" value="ECO:0007669"/>
    <property type="project" value="UniProtKB-EC"/>
</dbReference>
<dbReference type="GO" id="GO:0031145">
    <property type="term" value="P:anaphase-promoting complex-dependent catabolic process"/>
    <property type="evidence" value="ECO:0000250"/>
    <property type="project" value="UniProtKB"/>
</dbReference>
<dbReference type="GO" id="GO:0051301">
    <property type="term" value="P:cell division"/>
    <property type="evidence" value="ECO:0007669"/>
    <property type="project" value="UniProtKB-KW"/>
</dbReference>
<dbReference type="GO" id="GO:0010458">
    <property type="term" value="P:exit from mitosis"/>
    <property type="evidence" value="ECO:0000250"/>
    <property type="project" value="UniProtKB"/>
</dbReference>
<dbReference type="GO" id="GO:0016567">
    <property type="term" value="P:protein ubiquitination"/>
    <property type="evidence" value="ECO:0007669"/>
    <property type="project" value="UniProtKB-UniPathway"/>
</dbReference>
<dbReference type="CDD" id="cd23804">
    <property type="entry name" value="UBCc_UBE2S"/>
    <property type="match status" value="1"/>
</dbReference>
<dbReference type="FunFam" id="3.10.110.10:FF:000034">
    <property type="entry name" value="Ubiquitin-conjugating enzyme E2 S"/>
    <property type="match status" value="1"/>
</dbReference>
<dbReference type="Gene3D" id="3.10.110.10">
    <property type="entry name" value="Ubiquitin Conjugating Enzyme"/>
    <property type="match status" value="1"/>
</dbReference>
<dbReference type="InterPro" id="IPR050113">
    <property type="entry name" value="Ub_conjugating_enzyme"/>
</dbReference>
<dbReference type="InterPro" id="IPR000608">
    <property type="entry name" value="UBQ-conjugat_E2_core"/>
</dbReference>
<dbReference type="InterPro" id="IPR023313">
    <property type="entry name" value="UBQ-conjugating_AS"/>
</dbReference>
<dbReference type="InterPro" id="IPR016135">
    <property type="entry name" value="UBQ-conjugating_enzyme/RWD"/>
</dbReference>
<dbReference type="PANTHER" id="PTHR24067">
    <property type="entry name" value="UBIQUITIN-CONJUGATING ENZYME E2"/>
    <property type="match status" value="1"/>
</dbReference>
<dbReference type="Pfam" id="PF00179">
    <property type="entry name" value="UQ_con"/>
    <property type="match status" value="1"/>
</dbReference>
<dbReference type="SMART" id="SM00212">
    <property type="entry name" value="UBCc"/>
    <property type="match status" value="1"/>
</dbReference>
<dbReference type="SUPFAM" id="SSF54495">
    <property type="entry name" value="UBC-like"/>
    <property type="match status" value="1"/>
</dbReference>
<dbReference type="PROSITE" id="PS00183">
    <property type="entry name" value="UBC_1"/>
    <property type="match status" value="1"/>
</dbReference>
<dbReference type="PROSITE" id="PS50127">
    <property type="entry name" value="UBC_2"/>
    <property type="match status" value="1"/>
</dbReference>
<accession>B4H9W2</accession>
<reference key="1">
    <citation type="journal article" date="2007" name="Nature">
        <title>Evolution of genes and genomes on the Drosophila phylogeny.</title>
        <authorList>
            <consortium name="Drosophila 12 genomes consortium"/>
        </authorList>
    </citation>
    <scope>NUCLEOTIDE SEQUENCE [LARGE SCALE GENOMIC DNA]</scope>
    <source>
        <strain>MSH-3 / Tucson 14011-0111.49</strain>
    </source>
</reference>
<sequence length="209" mass="23399">MSSQYSNVENLSPQTIRQVMRELQEMETTPPEGIKVLINESDVTDIQALIDGPAGTPYAVGIFRVKLTLSKDFPQTPPKAYFLTKIFHPNVAGNGEICVNTLKKDWKPDLGIKHILLTIKCLLIVPNPESALNEEAGKMLLERYDDYSQRARMMTEIHAQPAKCGVGAASDAKDDDGPSTKKHAGLDKKLQDKKKEKLLKEKKRMLKRL</sequence>
<protein>
    <recommendedName>
        <fullName>Ubiquitin-conjugating enzyme E2 S</fullName>
        <ecNumber>2.3.2.23</ecNumber>
    </recommendedName>
    <alternativeName>
        <fullName>E2 ubiquitin-conjugating enzyme S</fullName>
    </alternativeName>
    <alternativeName>
        <fullName>Ubiquitin carrier protein S</fullName>
    </alternativeName>
    <alternativeName>
        <fullName>Ubiquitin-protein ligase S</fullName>
    </alternativeName>
</protein>
<feature type="chain" id="PRO_0000390442" description="Ubiquitin-conjugating enzyme E2 S">
    <location>
        <begin position="1"/>
        <end position="209"/>
    </location>
</feature>
<feature type="domain" description="UBC core" evidence="1">
    <location>
        <begin position="14"/>
        <end position="160"/>
    </location>
</feature>
<feature type="region of interest" description="Disordered" evidence="3">
    <location>
        <begin position="165"/>
        <end position="194"/>
    </location>
</feature>
<feature type="compositionally biased region" description="Basic and acidic residues" evidence="3">
    <location>
        <begin position="171"/>
        <end position="194"/>
    </location>
</feature>
<feature type="active site" description="Glycyl thioester intermediate" evidence="1 2">
    <location>
        <position position="98"/>
    </location>
</feature>
<proteinExistence type="inferred from homology"/>
<keyword id="KW-0067">ATP-binding</keyword>
<keyword id="KW-0131">Cell cycle</keyword>
<keyword id="KW-0132">Cell division</keyword>
<keyword id="KW-0547">Nucleotide-binding</keyword>
<keyword id="KW-1185">Reference proteome</keyword>
<keyword id="KW-0808">Transferase</keyword>
<keyword id="KW-0833">Ubl conjugation pathway</keyword>
<evidence type="ECO:0000255" key="1">
    <source>
        <dbReference type="PROSITE-ProRule" id="PRU00388"/>
    </source>
</evidence>
<evidence type="ECO:0000255" key="2">
    <source>
        <dbReference type="PROSITE-ProRule" id="PRU10133"/>
    </source>
</evidence>
<evidence type="ECO:0000256" key="3">
    <source>
        <dbReference type="SAM" id="MobiDB-lite"/>
    </source>
</evidence>
<name>UBE2S_DROPE</name>
<gene>
    <name type="ORF">GL16001</name>
</gene>
<organism>
    <name type="scientific">Drosophila persimilis</name>
    <name type="common">Fruit fly</name>
    <dbReference type="NCBI Taxonomy" id="7234"/>
    <lineage>
        <taxon>Eukaryota</taxon>
        <taxon>Metazoa</taxon>
        <taxon>Ecdysozoa</taxon>
        <taxon>Arthropoda</taxon>
        <taxon>Hexapoda</taxon>
        <taxon>Insecta</taxon>
        <taxon>Pterygota</taxon>
        <taxon>Neoptera</taxon>
        <taxon>Endopterygota</taxon>
        <taxon>Diptera</taxon>
        <taxon>Brachycera</taxon>
        <taxon>Muscomorpha</taxon>
        <taxon>Ephydroidea</taxon>
        <taxon>Drosophilidae</taxon>
        <taxon>Drosophila</taxon>
        <taxon>Sophophora</taxon>
    </lineage>
</organism>